<sequence>MYLNIAYPRNGTVKQFEISDEVLRRVQLQDYRLGNEVDGAIFGSEFKGYIFRLRGGSDKDGFPMVPGVLASSRVSLLVKRGAIGFNTFRGYQGERRRKNVRGCVLASDIALVNVTISKVGDQPIEGVTDTTAPRRLGPKRASKIRKLFNLSRTEDVRKYVVRRRVVKSGKKDRLKAPKIQRLITPRVKARRAKKAKDAIAKVRASAAERREYLRLIASNRRALRQRDHSKKHTQKVHAQRAEVAAFQKK</sequence>
<reference key="1">
    <citation type="journal article" date="1998" name="Biochem. Biophys. Res. Commun.">
        <title>Cloning and structural analysis of the gene encoding the ribosomal protein S6 from the parasite Leishmania infantum.</title>
        <authorList>
            <person name="Gonzalez-Aseguinolaza G."/>
            <person name="Taladriz S."/>
            <person name="Marquet A."/>
            <person name="Larraga V."/>
        </authorList>
    </citation>
    <scope>NUCLEOTIDE SEQUENCE [MRNA]</scope>
    <source>
        <strain>PB75</strain>
    </source>
</reference>
<dbReference type="EMBL" id="AF045457">
    <property type="protein sequence ID" value="AAC32260.1"/>
    <property type="molecule type" value="mRNA"/>
</dbReference>
<dbReference type="PIR" id="JE0265">
    <property type="entry name" value="JE0265"/>
</dbReference>
<dbReference type="PDB" id="6AZ1">
    <property type="method" value="EM"/>
    <property type="resolution" value="2.70 A"/>
    <property type="chains" value="G=1-249"/>
</dbReference>
<dbReference type="PDBsum" id="6AZ1"/>
<dbReference type="EMDB" id="EMD-7024"/>
<dbReference type="SMR" id="O44012"/>
<dbReference type="VEuPathDB" id="TriTrypDB:LINF_350025100"/>
<dbReference type="eggNOG" id="KOG1646">
    <property type="taxonomic scope" value="Eukaryota"/>
</dbReference>
<dbReference type="GO" id="GO:0005737">
    <property type="term" value="C:cytoplasm"/>
    <property type="evidence" value="ECO:0007669"/>
    <property type="project" value="UniProtKB-SubCell"/>
</dbReference>
<dbReference type="GO" id="GO:0005730">
    <property type="term" value="C:nucleolus"/>
    <property type="evidence" value="ECO:0007669"/>
    <property type="project" value="UniProtKB-SubCell"/>
</dbReference>
<dbReference type="GO" id="GO:0005840">
    <property type="term" value="C:ribosome"/>
    <property type="evidence" value="ECO:0007669"/>
    <property type="project" value="UniProtKB-KW"/>
</dbReference>
<dbReference type="GO" id="GO:0032040">
    <property type="term" value="C:small-subunit processome"/>
    <property type="evidence" value="ECO:0000250"/>
    <property type="project" value="UniProtKB"/>
</dbReference>
<dbReference type="GO" id="GO:0003735">
    <property type="term" value="F:structural constituent of ribosome"/>
    <property type="evidence" value="ECO:0007669"/>
    <property type="project" value="InterPro"/>
</dbReference>
<dbReference type="GO" id="GO:0042274">
    <property type="term" value="P:ribosomal small subunit biogenesis"/>
    <property type="evidence" value="ECO:0000250"/>
    <property type="project" value="UniProtKB"/>
</dbReference>
<dbReference type="GO" id="GO:0006412">
    <property type="term" value="P:translation"/>
    <property type="evidence" value="ECO:0007669"/>
    <property type="project" value="InterPro"/>
</dbReference>
<dbReference type="FunFam" id="1.20.5.2650:FF:000004">
    <property type="entry name" value="40S ribosomal protein S6"/>
    <property type="match status" value="1"/>
</dbReference>
<dbReference type="Gene3D" id="1.20.5.2650">
    <property type="match status" value="1"/>
</dbReference>
<dbReference type="InterPro" id="IPR001377">
    <property type="entry name" value="Ribosomal_eS6"/>
</dbReference>
<dbReference type="InterPro" id="IPR014401">
    <property type="entry name" value="Ribosomal_eS6-like"/>
</dbReference>
<dbReference type="InterPro" id="IPR018282">
    <property type="entry name" value="Ribosomal_eS6_CS"/>
</dbReference>
<dbReference type="PANTHER" id="PTHR11502">
    <property type="entry name" value="40S RIBOSOMAL PROTEIN S6"/>
    <property type="match status" value="1"/>
</dbReference>
<dbReference type="Pfam" id="PF01092">
    <property type="entry name" value="Ribosomal_S6e"/>
    <property type="match status" value="1"/>
</dbReference>
<dbReference type="PIRSF" id="PIRSF002129">
    <property type="entry name" value="Ribosom_S6_euk"/>
    <property type="match status" value="1"/>
</dbReference>
<dbReference type="SMART" id="SM01405">
    <property type="entry name" value="Ribosomal_S6e"/>
    <property type="match status" value="1"/>
</dbReference>
<dbReference type="PROSITE" id="PS00578">
    <property type="entry name" value="RIBOSOMAL_S6E"/>
    <property type="match status" value="1"/>
</dbReference>
<name>RS6_LEIIN</name>
<proteinExistence type="evidence at protein level"/>
<keyword id="KW-0002">3D-structure</keyword>
<keyword id="KW-0963">Cytoplasm</keyword>
<keyword id="KW-0539">Nucleus</keyword>
<keyword id="KW-0597">Phosphoprotein</keyword>
<keyword id="KW-0687">Ribonucleoprotein</keyword>
<keyword id="KW-0689">Ribosomal protein</keyword>
<organism>
    <name type="scientific">Leishmania infantum</name>
    <dbReference type="NCBI Taxonomy" id="5671"/>
    <lineage>
        <taxon>Eukaryota</taxon>
        <taxon>Discoba</taxon>
        <taxon>Euglenozoa</taxon>
        <taxon>Kinetoplastea</taxon>
        <taxon>Metakinetoplastina</taxon>
        <taxon>Trypanosomatida</taxon>
        <taxon>Trypanosomatidae</taxon>
        <taxon>Leishmaniinae</taxon>
        <taxon>Leishmania</taxon>
    </lineage>
</organism>
<accession>O44012</accession>
<evidence type="ECO:0000250" key="1">
    <source>
        <dbReference type="UniProtKB" id="P62753"/>
    </source>
</evidence>
<evidence type="ECO:0000256" key="2">
    <source>
        <dbReference type="SAM" id="MobiDB-lite"/>
    </source>
</evidence>
<evidence type="ECO:0000305" key="3"/>
<evidence type="ECO:0007829" key="4">
    <source>
        <dbReference type="PDB" id="6AZ1"/>
    </source>
</evidence>
<comment type="function">
    <text evidence="1">Component of the 40S small ribosomal subunit. Plays an important role in controlling cell growth and proliferation through the selective translation of particular classes of mRNA. Part of the small subunit (SSU) processome, first precursor of the small eukaryotic ribosomal subunit. During the assembly of the SSU processome in the nucleolus, many ribosome biogenesis factors, an RNA chaperone and ribosomal proteins associate with the nascent pre-rRNA and work in concert to generate RNA folding, modifications, rearrangements and cleavage as well as targeted degradation of pre-ribosomal RNA by the RNA exosome.</text>
</comment>
<comment type="subunit">
    <text evidence="1">Component of the small ribosomal subunit. Part of the small subunit (SSU) processome, composed of more than 70 proteins and the RNA chaperone small nucleolar RNA (snoRNA) U3.</text>
</comment>
<comment type="subcellular location">
    <subcellularLocation>
        <location evidence="1">Cytoplasm</location>
    </subcellularLocation>
    <subcellularLocation>
        <location evidence="1">Nucleus</location>
        <location evidence="1">Nucleolus</location>
    </subcellularLocation>
</comment>
<comment type="PTM">
    <text evidence="1">Ribosomal protein S6 is the major substrate of protein kinases in eukaryote ribosomes.</text>
</comment>
<comment type="similarity">
    <text evidence="3">Belongs to the eukaryotic ribosomal protein eS6 family.</text>
</comment>
<gene>
    <name type="primary">RPS6</name>
    <name type="synonym">RS6</name>
</gene>
<protein>
    <recommendedName>
        <fullName evidence="3">Small ribosomal subunit protein eS6</fullName>
    </recommendedName>
    <alternativeName>
        <fullName>40S ribosomal protein S6</fullName>
    </alternativeName>
</protein>
<feature type="chain" id="PRO_0000137327" description="Small ribosomal subunit protein eS6">
    <location>
        <begin position="1"/>
        <end position="249"/>
    </location>
</feature>
<feature type="region of interest" description="Disordered" evidence="2">
    <location>
        <begin position="223"/>
        <end position="249"/>
    </location>
</feature>
<feature type="compositionally biased region" description="Basic residues" evidence="2">
    <location>
        <begin position="223"/>
        <end position="238"/>
    </location>
</feature>
<feature type="strand" evidence="4">
    <location>
        <begin position="2"/>
        <end position="7"/>
    </location>
</feature>
<feature type="turn" evidence="4">
    <location>
        <begin position="8"/>
        <end position="10"/>
    </location>
</feature>
<feature type="strand" evidence="4">
    <location>
        <begin position="11"/>
        <end position="15"/>
    </location>
</feature>
<feature type="helix" evidence="4">
    <location>
        <begin position="20"/>
        <end position="23"/>
    </location>
</feature>
<feature type="strand" evidence="4">
    <location>
        <begin position="24"/>
        <end position="26"/>
    </location>
</feature>
<feature type="strand" evidence="4">
    <location>
        <begin position="36"/>
        <end position="38"/>
    </location>
</feature>
<feature type="helix" evidence="4">
    <location>
        <begin position="39"/>
        <end position="41"/>
    </location>
</feature>
<feature type="strand" evidence="4">
    <location>
        <begin position="50"/>
        <end position="57"/>
    </location>
</feature>
<feature type="strand" evidence="4">
    <location>
        <begin position="71"/>
        <end position="78"/>
    </location>
</feature>
<feature type="strand" evidence="4">
    <location>
        <begin position="82"/>
        <end position="85"/>
    </location>
</feature>
<feature type="strand" evidence="4">
    <location>
        <begin position="87"/>
        <end position="90"/>
    </location>
</feature>
<feature type="strand" evidence="4">
    <location>
        <begin position="96"/>
        <end position="101"/>
    </location>
</feature>
<feature type="strand" evidence="4">
    <location>
        <begin position="110"/>
        <end position="118"/>
    </location>
</feature>
<feature type="turn" evidence="4">
    <location>
        <begin position="126"/>
        <end position="128"/>
    </location>
</feature>
<feature type="helix" evidence="4">
    <location>
        <begin position="143"/>
        <end position="147"/>
    </location>
</feature>
<feature type="strand" evidence="4">
    <location>
        <begin position="152"/>
        <end position="154"/>
    </location>
</feature>
<feature type="helix" evidence="4">
    <location>
        <begin position="185"/>
        <end position="210"/>
    </location>
</feature>
<feature type="helix" evidence="4">
    <location>
        <begin position="212"/>
        <end position="237"/>
    </location>
</feature>